<dbReference type="EMBL" id="CP000247">
    <property type="protein sequence ID" value="ABG70211.1"/>
    <property type="molecule type" value="Genomic_DNA"/>
</dbReference>
<dbReference type="RefSeq" id="WP_001136827.1">
    <property type="nucleotide sequence ID" value="NC_008253.1"/>
</dbReference>
<dbReference type="SMR" id="Q0TFR8"/>
<dbReference type="GeneID" id="93775010"/>
<dbReference type="KEGG" id="ecp:ECP_2212"/>
<dbReference type="HOGENOM" id="CLU_074944_2_0_6"/>
<dbReference type="Proteomes" id="UP000009182">
    <property type="component" value="Chromosome"/>
</dbReference>
<dbReference type="GO" id="GO:0005829">
    <property type="term" value="C:cytosol"/>
    <property type="evidence" value="ECO:0007669"/>
    <property type="project" value="UniProtKB-ARBA"/>
</dbReference>
<dbReference type="GO" id="GO:0003746">
    <property type="term" value="F:translation elongation factor activity"/>
    <property type="evidence" value="ECO:0007669"/>
    <property type="project" value="UniProtKB-UniRule"/>
</dbReference>
<dbReference type="GO" id="GO:0043043">
    <property type="term" value="P:peptide biosynthetic process"/>
    <property type="evidence" value="ECO:0007669"/>
    <property type="project" value="InterPro"/>
</dbReference>
<dbReference type="CDD" id="cd04470">
    <property type="entry name" value="S1_EF-P_repeat_1"/>
    <property type="match status" value="1"/>
</dbReference>
<dbReference type="CDD" id="cd05794">
    <property type="entry name" value="S1_EF-P_repeat_2"/>
    <property type="match status" value="1"/>
</dbReference>
<dbReference type="FunFam" id="2.40.50.140:FF:000004">
    <property type="entry name" value="Elongation factor P"/>
    <property type="match status" value="1"/>
</dbReference>
<dbReference type="FunFam" id="2.30.30.30:FF:000011">
    <property type="entry name" value="Elongation factor P-like protein"/>
    <property type="match status" value="1"/>
</dbReference>
<dbReference type="FunFam" id="2.40.50.140:FF:000053">
    <property type="entry name" value="Elongation factor P-like protein"/>
    <property type="match status" value="1"/>
</dbReference>
<dbReference type="Gene3D" id="2.30.30.30">
    <property type="match status" value="1"/>
</dbReference>
<dbReference type="Gene3D" id="2.40.50.140">
    <property type="entry name" value="Nucleic acid-binding proteins"/>
    <property type="match status" value="2"/>
</dbReference>
<dbReference type="HAMAP" id="MF_00646">
    <property type="entry name" value="EFP"/>
    <property type="match status" value="1"/>
</dbReference>
<dbReference type="InterPro" id="IPR015365">
    <property type="entry name" value="Elong-fact-P_C"/>
</dbReference>
<dbReference type="InterPro" id="IPR012340">
    <property type="entry name" value="NA-bd_OB-fold"/>
</dbReference>
<dbReference type="InterPro" id="IPR014722">
    <property type="entry name" value="Rib_uL2_dom2"/>
</dbReference>
<dbReference type="InterPro" id="IPR020599">
    <property type="entry name" value="Transl_elong_fac_P/YeiP"/>
</dbReference>
<dbReference type="InterPro" id="IPR013185">
    <property type="entry name" value="Transl_elong_KOW-like"/>
</dbReference>
<dbReference type="InterPro" id="IPR011897">
    <property type="entry name" value="Transl_elong_p-like_YeiP"/>
</dbReference>
<dbReference type="InterPro" id="IPR001059">
    <property type="entry name" value="Transl_elong_P/YeiP_cen"/>
</dbReference>
<dbReference type="InterPro" id="IPR013852">
    <property type="entry name" value="Transl_elong_P/YeiP_CS"/>
</dbReference>
<dbReference type="InterPro" id="IPR008991">
    <property type="entry name" value="Translation_prot_SH3-like_sf"/>
</dbReference>
<dbReference type="NCBIfam" id="NF001810">
    <property type="entry name" value="PRK00529.1"/>
    <property type="match status" value="1"/>
</dbReference>
<dbReference type="NCBIfam" id="NF003392">
    <property type="entry name" value="PRK04542.1"/>
    <property type="match status" value="1"/>
</dbReference>
<dbReference type="NCBIfam" id="TIGR02178">
    <property type="entry name" value="yeiP"/>
    <property type="match status" value="1"/>
</dbReference>
<dbReference type="PANTHER" id="PTHR30053">
    <property type="entry name" value="ELONGATION FACTOR P"/>
    <property type="match status" value="1"/>
</dbReference>
<dbReference type="PANTHER" id="PTHR30053:SF14">
    <property type="entry name" value="TRANSLATION ELONGATION FACTOR KOW-LIKE DOMAIN-CONTAINING PROTEIN"/>
    <property type="match status" value="1"/>
</dbReference>
<dbReference type="Pfam" id="PF01132">
    <property type="entry name" value="EFP"/>
    <property type="match status" value="1"/>
</dbReference>
<dbReference type="Pfam" id="PF08207">
    <property type="entry name" value="EFP_N"/>
    <property type="match status" value="1"/>
</dbReference>
<dbReference type="Pfam" id="PF09285">
    <property type="entry name" value="Elong-fact-P_C"/>
    <property type="match status" value="1"/>
</dbReference>
<dbReference type="PIRSF" id="PIRSF005901">
    <property type="entry name" value="EF-P"/>
    <property type="match status" value="1"/>
</dbReference>
<dbReference type="SMART" id="SM01185">
    <property type="entry name" value="EFP"/>
    <property type="match status" value="1"/>
</dbReference>
<dbReference type="SMART" id="SM00841">
    <property type="entry name" value="Elong-fact-P_C"/>
    <property type="match status" value="1"/>
</dbReference>
<dbReference type="SUPFAM" id="SSF50249">
    <property type="entry name" value="Nucleic acid-binding proteins"/>
    <property type="match status" value="2"/>
</dbReference>
<dbReference type="SUPFAM" id="SSF50104">
    <property type="entry name" value="Translation proteins SH3-like domain"/>
    <property type="match status" value="1"/>
</dbReference>
<dbReference type="PROSITE" id="PS01275">
    <property type="entry name" value="EFP"/>
    <property type="match status" value="1"/>
</dbReference>
<proteinExistence type="inferred from homology"/>
<name>EFPL_ECOL5</name>
<reference key="1">
    <citation type="journal article" date="2006" name="Mol. Microbiol.">
        <title>Role of pathogenicity island-associated integrases in the genome plasticity of uropathogenic Escherichia coli strain 536.</title>
        <authorList>
            <person name="Hochhut B."/>
            <person name="Wilde C."/>
            <person name="Balling G."/>
            <person name="Middendorf B."/>
            <person name="Dobrindt U."/>
            <person name="Brzuszkiewicz E."/>
            <person name="Gottschalk G."/>
            <person name="Carniel E."/>
            <person name="Hacker J."/>
        </authorList>
    </citation>
    <scope>NUCLEOTIDE SEQUENCE [LARGE SCALE GENOMIC DNA]</scope>
    <source>
        <strain>536 / UPEC</strain>
    </source>
</reference>
<evidence type="ECO:0000255" key="1">
    <source>
        <dbReference type="HAMAP-Rule" id="MF_00646"/>
    </source>
</evidence>
<comment type="similarity">
    <text evidence="1">Belongs to the elongation factor P family.</text>
</comment>
<gene>
    <name evidence="1" type="primary">yeiP</name>
    <name type="ordered locus">ECP_2212</name>
</gene>
<organism>
    <name type="scientific">Escherichia coli O6:K15:H31 (strain 536 / UPEC)</name>
    <dbReference type="NCBI Taxonomy" id="362663"/>
    <lineage>
        <taxon>Bacteria</taxon>
        <taxon>Pseudomonadati</taxon>
        <taxon>Pseudomonadota</taxon>
        <taxon>Gammaproteobacteria</taxon>
        <taxon>Enterobacterales</taxon>
        <taxon>Enterobacteriaceae</taxon>
        <taxon>Escherichia</taxon>
    </lineage>
</organism>
<sequence length="190" mass="21533">MPRANEIKKGMVLNYNGKLLLVKDIDIQSPTARGAATLYKMRFSDVRTGLKVEERFKGDDIVDTVTLTRRYVDFSYVDGNEYVFMDKEDYTPYTFTKDQIEEELLFMPEGGMPDMQVLTWDGQLLALELPQTVDLEIVETAPGIKGASASARNKPATLSTGLVIQVPEYLSPGEKIRIHIEERRYMGRAD</sequence>
<accession>Q0TFR8</accession>
<feature type="chain" id="PRO_0000259896" description="Elongation factor P-like protein">
    <location>
        <begin position="1"/>
        <end position="190"/>
    </location>
</feature>
<protein>
    <recommendedName>
        <fullName evidence="1">Elongation factor P-like protein</fullName>
    </recommendedName>
</protein>